<proteinExistence type="evidence at protein level"/>
<evidence type="ECO:0000269" key="1">
    <source>
    </source>
</evidence>
<evidence type="ECO:0000305" key="2"/>
<dbReference type="EMBL" id="D13819">
    <property type="protein sequence ID" value="BAA02972.1"/>
    <property type="molecule type" value="Genomic_DNA"/>
</dbReference>
<dbReference type="PIR" id="A43809">
    <property type="entry name" value="XKARA"/>
</dbReference>
<dbReference type="PIR" id="JX0246">
    <property type="entry name" value="JX0246"/>
</dbReference>
<dbReference type="SMR" id="P31608"/>
<dbReference type="MEROPS" id="I03.006"/>
<dbReference type="GO" id="GO:0005576">
    <property type="term" value="C:extracellular region"/>
    <property type="evidence" value="ECO:0007669"/>
    <property type="project" value="UniProtKB-SubCell"/>
</dbReference>
<dbReference type="GO" id="GO:0004867">
    <property type="term" value="F:serine-type endopeptidase inhibitor activity"/>
    <property type="evidence" value="ECO:0007669"/>
    <property type="project" value="UniProtKB-KW"/>
</dbReference>
<dbReference type="Gene3D" id="2.80.10.50">
    <property type="match status" value="2"/>
</dbReference>
<dbReference type="InterPro" id="IPR011065">
    <property type="entry name" value="Kunitz_inhibitor_STI-like_sf"/>
</dbReference>
<dbReference type="InterPro" id="IPR016308">
    <property type="entry name" value="Prot_inh_API-A/B"/>
</dbReference>
<dbReference type="InterPro" id="IPR002160">
    <property type="entry name" value="Prot_inh_Kunz-lg"/>
</dbReference>
<dbReference type="Pfam" id="PF00197">
    <property type="entry name" value="Kunitz_legume"/>
    <property type="match status" value="1"/>
</dbReference>
<dbReference type="PIRSF" id="PIRSF001653">
    <property type="entry name" value="API-B"/>
    <property type="match status" value="1"/>
</dbReference>
<dbReference type="SMART" id="SM00452">
    <property type="entry name" value="STI"/>
    <property type="match status" value="1"/>
</dbReference>
<dbReference type="SUPFAM" id="SSF50386">
    <property type="entry name" value="STI-like"/>
    <property type="match status" value="1"/>
</dbReference>
<sequence length="181" mass="19152">MAASNALLLISGVLLISLAVLCHGDPVVDSDGDAVQLNLGGNYPLYTIQSAAIGFRGGLSTLHKDACKSYVYEAPETDRGLPVGFSASATSQPVMQLGSRYKFSFSMPVPLICDTAWSIGKSTEETGVYKLAACSCEFCKIACPEVGSFNVNGRTLLGIGGEHFTVRFQKFDALAMKTAPQ</sequence>
<accession>P31608</accession>
<reference key="1">
    <citation type="journal article" date="1993" name="J. Biochem.">
        <title>cDNA and genomic structures of arrowhead proteinase inhibitors.</title>
        <authorList>
            <person name="Xu W."/>
            <person name="Tao W."/>
            <person name="Gong Z."/>
            <person name="Chi C.-W."/>
        </authorList>
    </citation>
    <scope>NUCLEOTIDE SEQUENCE [GENOMIC DNA]</scope>
</reference>
<reference key="2">
    <citation type="journal article" date="1992" name="J. Biochem.">
        <title>Primary structure and disulfide bridge location of arrowhead double-headed proteinase inhibitors.</title>
        <authorList>
            <person name="Yang H.-L."/>
            <person name="Luo R.-S."/>
            <person name="Wang L.-X."/>
            <person name="Zhu D.-X."/>
            <person name="Chi C.-W."/>
        </authorList>
    </citation>
    <scope>PROTEIN SEQUENCE OF 25-174</scope>
</reference>
<organism>
    <name type="scientific">Sagittaria sagittifolia</name>
    <name type="common">Arrowhead</name>
    <dbReference type="NCBI Taxonomy" id="4451"/>
    <lineage>
        <taxon>Eukaryota</taxon>
        <taxon>Viridiplantae</taxon>
        <taxon>Streptophyta</taxon>
        <taxon>Embryophyta</taxon>
        <taxon>Tracheophyta</taxon>
        <taxon>Spermatophyta</taxon>
        <taxon>Magnoliopsida</taxon>
        <taxon>Liliopsida</taxon>
        <taxon>Alismataceae</taxon>
        <taxon>Sagittaria</taxon>
    </lineage>
</organism>
<name>IPRA_SAGSA</name>
<feature type="signal peptide" evidence="1">
    <location>
        <begin position="1"/>
        <end position="24"/>
    </location>
</feature>
<feature type="chain" id="PRO_0000016897" description="Proteinase inhibitor A">
    <location>
        <begin position="25"/>
        <end position="181"/>
    </location>
</feature>
<feature type="site" description="Reactive bond for trypsin" evidence="2">
    <location>
        <begin position="68"/>
        <end position="69"/>
    </location>
</feature>
<feature type="site" description="Reactive bond" evidence="2">
    <location>
        <begin position="100"/>
        <end position="101"/>
    </location>
</feature>
<feature type="disulfide bond">
    <location>
        <begin position="67"/>
        <end position="113"/>
    </location>
</feature>
<feature type="disulfide bond">
    <location>
        <begin position="134"/>
        <end position="143"/>
    </location>
</feature>
<feature type="disulfide bond">
    <location>
        <begin position="136"/>
        <end position="139"/>
    </location>
</feature>
<feature type="sequence conflict" description="In Ref. 2; AA sequence." evidence="2" ref="2">
    <original>T</original>
    <variation>W</variation>
    <location>
        <position position="61"/>
    </location>
</feature>
<feature type="sequence conflict" description="In Ref. 2; AA sequence." evidence="2" ref="2">
    <original>G</original>
    <variation>S</variation>
    <location>
        <position position="84"/>
    </location>
</feature>
<feature type="sequence conflict" description="In Ref. 2; AA sequence." evidence="2" ref="2">
    <original>N</original>
    <variation>D</variation>
    <location>
        <position position="152"/>
    </location>
</feature>
<feature type="sequence conflict" description="In Ref. 2; AA sequence." evidence="2" ref="2">
    <original>V</original>
    <variation>I</variation>
    <location>
        <position position="166"/>
    </location>
</feature>
<feature type="sequence conflict" description="In Ref. 2; AA sequence." evidence="2" ref="2">
    <original>L</original>
    <variation>F</variation>
    <location>
        <position position="174"/>
    </location>
</feature>
<comment type="function">
    <text>Possesses two reactive sites. Inhibits an equimolar amount of trypsin and chymotrypsin simultaneously, and inhibits kallikrein weakly.</text>
</comment>
<comment type="subcellular location">
    <subcellularLocation>
        <location>Secreted</location>
    </subcellularLocation>
</comment>
<comment type="similarity">
    <text evidence="2">Belongs to the protease inhibitor I3 (leguminous Kunitz-type inhibitor) family.</text>
</comment>
<keyword id="KW-0903">Direct protein sequencing</keyword>
<keyword id="KW-1015">Disulfide bond</keyword>
<keyword id="KW-0646">Protease inhibitor</keyword>
<keyword id="KW-0964">Secreted</keyword>
<keyword id="KW-0722">Serine protease inhibitor</keyword>
<keyword id="KW-0732">Signal</keyword>
<protein>
    <recommendedName>
        <fullName>Proteinase inhibitor A</fullName>
    </recommendedName>
    <alternativeName>
        <fullName>Double-headed proteinase inhibitor A</fullName>
        <shortName>API-A</shortName>
    </alternativeName>
</protein>